<comment type="function">
    <text evidence="1">Small GTPase required for proper localization of RNA polymerase II and III (RNAPII and RNAPIII). May act at an RNAP assembly step prior to nuclear import.</text>
</comment>
<comment type="subunit">
    <text evidence="1 2">Heterodimers with gpn1 or gpn3. Binds to RNA polymerase II (RNAPII).</text>
</comment>
<comment type="similarity">
    <text evidence="4">Belongs to the GPN-loop GTPase family.</text>
</comment>
<comment type="sequence caution" evidence="4">
    <conflict type="erroneous initiation">
        <sequence resource="EMBL-CDS" id="AAH83538"/>
    </conflict>
</comment>
<comment type="sequence caution" evidence="4">
    <conflict type="frameshift">
        <sequence resource="EMBL-CDS" id="AAS92637"/>
    </conflict>
</comment>
<name>GPN2_DANRE</name>
<feature type="chain" id="PRO_0000247832" description="GPN-loop GTPase 2">
    <location>
        <begin position="1"/>
        <end position="311"/>
    </location>
</feature>
<feature type="short sequence motif" description="Gly-Pro-Asn (GPN)-loop; involved in dimer interface" evidence="3">
    <location>
        <begin position="77"/>
        <end position="79"/>
    </location>
</feature>
<feature type="binding site" evidence="3">
    <location>
        <begin position="20"/>
        <end position="25"/>
    </location>
    <ligand>
        <name>GTP</name>
        <dbReference type="ChEBI" id="CHEBI:37565"/>
    </ligand>
</feature>
<feature type="binding site" evidence="3">
    <location>
        <begin position="179"/>
        <end position="182"/>
    </location>
    <ligand>
        <name>GTP</name>
        <dbReference type="ChEBI" id="CHEBI:37565"/>
    </ligand>
</feature>
<feature type="site" description="Stabilizes the phosphate intermediate; shared with dimeric partner" evidence="3">
    <location>
        <position position="79"/>
    </location>
</feature>
<reference key="1">
    <citation type="journal article" date="2004" name="Proc. Natl. Acad. Sci. U.S.A.">
        <title>Hematopoietic gene expression profile in zebrafish kidney marrow.</title>
        <authorList>
            <person name="Song H.-D."/>
            <person name="Sun X.-J."/>
            <person name="Deng M."/>
            <person name="Zhang G.-W."/>
            <person name="Zhou Y."/>
            <person name="Wu X.-Y."/>
            <person name="Sheng Y."/>
            <person name="Chen Y."/>
            <person name="Ruan Z."/>
            <person name="Jiang C.-L."/>
            <person name="Fan H.-Y."/>
            <person name="Zon L.I."/>
            <person name="Kanki J.P."/>
            <person name="Liu T.X."/>
            <person name="Look A.T."/>
            <person name="Chen Z."/>
        </authorList>
    </citation>
    <scope>NUCLEOTIDE SEQUENCE [LARGE SCALE MRNA]</scope>
    <source>
        <tissue>Kidney marrow</tissue>
    </source>
</reference>
<reference key="2">
    <citation type="submission" date="2004-10" db="EMBL/GenBank/DDBJ databases">
        <authorList>
            <consortium name="NIH - Zebrafish Gene Collection (ZGC) project"/>
        </authorList>
    </citation>
    <scope>NUCLEOTIDE SEQUENCE [LARGE SCALE MRNA]</scope>
    <source>
        <tissue>Brain</tissue>
    </source>
</reference>
<protein>
    <recommendedName>
        <fullName evidence="2">GPN-loop GTPase 2</fullName>
    </recommendedName>
    <alternativeName>
        <fullName evidence="2">ATP-binding domain 1 family member B</fullName>
    </alternativeName>
</protein>
<keyword id="KW-0342">GTP-binding</keyword>
<keyword id="KW-0378">Hydrolase</keyword>
<keyword id="KW-0547">Nucleotide-binding</keyword>
<keyword id="KW-1185">Reference proteome</keyword>
<organism>
    <name type="scientific">Danio rerio</name>
    <name type="common">Zebrafish</name>
    <name type="synonym">Brachydanio rerio</name>
    <dbReference type="NCBI Taxonomy" id="7955"/>
    <lineage>
        <taxon>Eukaryota</taxon>
        <taxon>Metazoa</taxon>
        <taxon>Chordata</taxon>
        <taxon>Craniata</taxon>
        <taxon>Vertebrata</taxon>
        <taxon>Euteleostomi</taxon>
        <taxon>Actinopterygii</taxon>
        <taxon>Neopterygii</taxon>
        <taxon>Teleostei</taxon>
        <taxon>Ostariophysi</taxon>
        <taxon>Cypriniformes</taxon>
        <taxon>Danionidae</taxon>
        <taxon>Danioninae</taxon>
        <taxon>Danio</taxon>
    </lineage>
</organism>
<accession>Q6PUR6</accession>
<accession>Q5XIY1</accession>
<gene>
    <name evidence="2" type="primary">gpn2</name>
    <name evidence="2" type="synonym">atpbd1b</name>
    <name type="ORF">zgc:92877</name>
</gene>
<evidence type="ECO:0000250" key="1">
    <source>
        <dbReference type="UniProtKB" id="Q08726"/>
    </source>
</evidence>
<evidence type="ECO:0000250" key="2">
    <source>
        <dbReference type="UniProtKB" id="Q9H9Y4"/>
    </source>
</evidence>
<evidence type="ECO:0000250" key="3">
    <source>
        <dbReference type="UniProtKB" id="Q9UYR9"/>
    </source>
</evidence>
<evidence type="ECO:0000305" key="4"/>
<proteinExistence type="evidence at transcript level"/>
<dbReference type="EMBL" id="AY576999">
    <property type="protein sequence ID" value="AAS92637.1"/>
    <property type="status" value="ALT_FRAME"/>
    <property type="molecule type" value="mRNA"/>
</dbReference>
<dbReference type="EMBL" id="BC083538">
    <property type="protein sequence ID" value="AAH83538.1"/>
    <property type="status" value="ALT_INIT"/>
    <property type="molecule type" value="mRNA"/>
</dbReference>
<dbReference type="RefSeq" id="NP_999966.2">
    <property type="nucleotide sequence ID" value="NM_214801.2"/>
</dbReference>
<dbReference type="SMR" id="Q6PUR6"/>
<dbReference type="FunCoup" id="Q6PUR6">
    <property type="interactions" value="2529"/>
</dbReference>
<dbReference type="STRING" id="7955.ENSDARP00000138851"/>
<dbReference type="PaxDb" id="7955-ENSDARP00000092687"/>
<dbReference type="GeneID" id="407722"/>
<dbReference type="KEGG" id="dre:407722"/>
<dbReference type="AGR" id="ZFIN:ZDB-GENE-041010-86"/>
<dbReference type="CTD" id="54707"/>
<dbReference type="ZFIN" id="ZDB-GENE-041010-86">
    <property type="gene designation" value="gpn2"/>
</dbReference>
<dbReference type="eggNOG" id="KOG1533">
    <property type="taxonomic scope" value="Eukaryota"/>
</dbReference>
<dbReference type="InParanoid" id="Q6PUR6"/>
<dbReference type="OrthoDB" id="5839at2759"/>
<dbReference type="PhylomeDB" id="Q6PUR6"/>
<dbReference type="PRO" id="PR:Q6PUR6"/>
<dbReference type="Proteomes" id="UP000000437">
    <property type="component" value="Chromosome 16"/>
</dbReference>
<dbReference type="GO" id="GO:0005525">
    <property type="term" value="F:GTP binding"/>
    <property type="evidence" value="ECO:0007669"/>
    <property type="project" value="UniProtKB-KW"/>
</dbReference>
<dbReference type="GO" id="GO:0003924">
    <property type="term" value="F:GTPase activity"/>
    <property type="evidence" value="ECO:0000318"/>
    <property type="project" value="GO_Central"/>
</dbReference>
<dbReference type="CDD" id="cd17871">
    <property type="entry name" value="GPN2"/>
    <property type="match status" value="1"/>
</dbReference>
<dbReference type="FunFam" id="3.40.50.300:FF:000338">
    <property type="entry name" value="GPN-loop GTPase 2"/>
    <property type="match status" value="1"/>
</dbReference>
<dbReference type="Gene3D" id="3.40.50.300">
    <property type="entry name" value="P-loop containing nucleotide triphosphate hydrolases"/>
    <property type="match status" value="1"/>
</dbReference>
<dbReference type="InterPro" id="IPR004130">
    <property type="entry name" value="Gpn"/>
</dbReference>
<dbReference type="InterPro" id="IPR030231">
    <property type="entry name" value="Gpn2"/>
</dbReference>
<dbReference type="InterPro" id="IPR027417">
    <property type="entry name" value="P-loop_NTPase"/>
</dbReference>
<dbReference type="PANTHER" id="PTHR21231:SF3">
    <property type="entry name" value="GPN-LOOP GTPASE 2"/>
    <property type="match status" value="1"/>
</dbReference>
<dbReference type="PANTHER" id="PTHR21231">
    <property type="entry name" value="XPA-BINDING PROTEIN 1-RELATED"/>
    <property type="match status" value="1"/>
</dbReference>
<dbReference type="Pfam" id="PF03029">
    <property type="entry name" value="ATP_bind_1"/>
    <property type="match status" value="1"/>
</dbReference>
<dbReference type="SUPFAM" id="SSF52540">
    <property type="entry name" value="P-loop containing nucleoside triphosphate hydrolases"/>
    <property type="match status" value="1"/>
</dbReference>
<sequence>MMSSDPPSLRFGQVVIGPPGSGKTTYCRGMQEFLSRLGRKVVIVNLDPANEGLPYPCAVDIAELVTLDDVMDGLKLGPNGGLIYSMEYLEANLDWLENKLKLHHDCYFLFDCPGQVELYTHHNSVKNIFAQLSKWNFRLTAVHLVDSHYCADPAKFISVLCTSLSTMLHVELPHVNVLSKMDLIEQYGKLAFNLDFYTEVLDLSYLVEHLSADPFFRNFNHLNVKLAEVIQDYSLVSFVPLNVQDKESMMQVLRTVDKANGYCFGDLEERNLQAMMSAAVGADFQFSTTLGVQEKYLDATKNHVEDEVMDL</sequence>